<keyword id="KW-0520">NAD</keyword>
<keyword id="KW-0560">Oxidoreductase</keyword>
<keyword id="KW-0816">Tricarboxylic acid cycle</keyword>
<organism>
    <name type="scientific">Escherichia coli (strain SMS-3-5 / SECEC)</name>
    <dbReference type="NCBI Taxonomy" id="439855"/>
    <lineage>
        <taxon>Bacteria</taxon>
        <taxon>Pseudomonadati</taxon>
        <taxon>Pseudomonadota</taxon>
        <taxon>Gammaproteobacteria</taxon>
        <taxon>Enterobacterales</taxon>
        <taxon>Enterobacteriaceae</taxon>
        <taxon>Escherichia</taxon>
    </lineage>
</organism>
<evidence type="ECO:0000255" key="1">
    <source>
        <dbReference type="HAMAP-Rule" id="MF_01516"/>
    </source>
</evidence>
<accession>B1LGK2</accession>
<sequence length="312" mass="32337">MKVAVLGAAGGIGQALALLLKTQLPSGSELSLYDIAPVTPGVAVDLSHIPTAVKIKGFSGEDATPALEGADVVLISAGVARKPGMDRSDLFNVNAGIVKNLVQQVAKTCPKACIGIITNPVNTTVAIAAEVLKKAGVYDKNKLFGVTTLDIIRSNTFVAELKGKQPGEVEVPVIGGHSGVTILPLLSQVPGVSFTEQEVADLTKRIQNAGTEVVEAKAGGGSATLSMGQAAARFGLSLVRALQGEQGVVECAYVEGDGQYARFFSQPLLLGKNGVEERKSIGTLSAFEKNALEGMLDTLKKDIALGEEFVNK</sequence>
<protein>
    <recommendedName>
        <fullName evidence="1">Malate dehydrogenase</fullName>
        <ecNumber evidence="1">1.1.1.37</ecNumber>
    </recommendedName>
</protein>
<gene>
    <name evidence="1" type="primary">mdh</name>
    <name type="ordered locus">EcSMS35_3532</name>
</gene>
<proteinExistence type="inferred from homology"/>
<reference key="1">
    <citation type="journal article" date="2008" name="J. Bacteriol.">
        <title>Insights into the environmental resistance gene pool from the genome sequence of the multidrug-resistant environmental isolate Escherichia coli SMS-3-5.</title>
        <authorList>
            <person name="Fricke W.F."/>
            <person name="Wright M.S."/>
            <person name="Lindell A.H."/>
            <person name="Harkins D.M."/>
            <person name="Baker-Austin C."/>
            <person name="Ravel J."/>
            <person name="Stepanauskas R."/>
        </authorList>
    </citation>
    <scope>NUCLEOTIDE SEQUENCE [LARGE SCALE GENOMIC DNA]</scope>
    <source>
        <strain>SMS-3-5 / SECEC</strain>
    </source>
</reference>
<dbReference type="EC" id="1.1.1.37" evidence="1"/>
<dbReference type="EMBL" id="CP000970">
    <property type="protein sequence ID" value="ACB17174.1"/>
    <property type="molecule type" value="Genomic_DNA"/>
</dbReference>
<dbReference type="RefSeq" id="WP_001315036.1">
    <property type="nucleotide sequence ID" value="NC_010498.1"/>
</dbReference>
<dbReference type="SMR" id="B1LGK2"/>
<dbReference type="KEGG" id="ecm:EcSMS35_3532"/>
<dbReference type="HOGENOM" id="CLU_047181_0_1_6"/>
<dbReference type="Proteomes" id="UP000007011">
    <property type="component" value="Chromosome"/>
</dbReference>
<dbReference type="GO" id="GO:0005737">
    <property type="term" value="C:cytoplasm"/>
    <property type="evidence" value="ECO:0007669"/>
    <property type="project" value="TreeGrafter"/>
</dbReference>
<dbReference type="GO" id="GO:0030060">
    <property type="term" value="F:L-malate dehydrogenase (NAD+) activity"/>
    <property type="evidence" value="ECO:0007669"/>
    <property type="project" value="UniProtKB-UniRule"/>
</dbReference>
<dbReference type="GO" id="GO:0006108">
    <property type="term" value="P:malate metabolic process"/>
    <property type="evidence" value="ECO:0007669"/>
    <property type="project" value="InterPro"/>
</dbReference>
<dbReference type="GO" id="GO:0006099">
    <property type="term" value="P:tricarboxylic acid cycle"/>
    <property type="evidence" value="ECO:0007669"/>
    <property type="project" value="UniProtKB-UniRule"/>
</dbReference>
<dbReference type="CDD" id="cd01337">
    <property type="entry name" value="MDH_glyoxysomal_mitochondrial"/>
    <property type="match status" value="1"/>
</dbReference>
<dbReference type="FunFam" id="3.40.50.720:FF:000017">
    <property type="entry name" value="Malate dehydrogenase"/>
    <property type="match status" value="1"/>
</dbReference>
<dbReference type="FunFam" id="3.90.110.10:FF:000001">
    <property type="entry name" value="Malate dehydrogenase"/>
    <property type="match status" value="1"/>
</dbReference>
<dbReference type="Gene3D" id="3.90.110.10">
    <property type="entry name" value="Lactate dehydrogenase/glycoside hydrolase, family 4, C-terminal"/>
    <property type="match status" value="1"/>
</dbReference>
<dbReference type="Gene3D" id="3.40.50.720">
    <property type="entry name" value="NAD(P)-binding Rossmann-like Domain"/>
    <property type="match status" value="1"/>
</dbReference>
<dbReference type="HAMAP" id="MF_01516">
    <property type="entry name" value="Malate_dehydrog_1"/>
    <property type="match status" value="1"/>
</dbReference>
<dbReference type="InterPro" id="IPR001557">
    <property type="entry name" value="L-lactate/malate_DH"/>
</dbReference>
<dbReference type="InterPro" id="IPR022383">
    <property type="entry name" value="Lactate/malate_DH_C"/>
</dbReference>
<dbReference type="InterPro" id="IPR001236">
    <property type="entry name" value="Lactate/malate_DH_N"/>
</dbReference>
<dbReference type="InterPro" id="IPR015955">
    <property type="entry name" value="Lactate_DH/Glyco_Ohase_4_C"/>
</dbReference>
<dbReference type="InterPro" id="IPR001252">
    <property type="entry name" value="Malate_DH_AS"/>
</dbReference>
<dbReference type="InterPro" id="IPR010097">
    <property type="entry name" value="Malate_DH_type1"/>
</dbReference>
<dbReference type="InterPro" id="IPR023958">
    <property type="entry name" value="Malate_DH_type1_bac"/>
</dbReference>
<dbReference type="InterPro" id="IPR036291">
    <property type="entry name" value="NAD(P)-bd_dom_sf"/>
</dbReference>
<dbReference type="NCBIfam" id="TIGR01772">
    <property type="entry name" value="MDH_euk_gproteo"/>
    <property type="match status" value="1"/>
</dbReference>
<dbReference type="PANTHER" id="PTHR11540">
    <property type="entry name" value="MALATE AND LACTATE DEHYDROGENASE"/>
    <property type="match status" value="1"/>
</dbReference>
<dbReference type="PANTHER" id="PTHR11540:SF16">
    <property type="entry name" value="MALATE DEHYDROGENASE, MITOCHONDRIAL"/>
    <property type="match status" value="1"/>
</dbReference>
<dbReference type="Pfam" id="PF02866">
    <property type="entry name" value="Ldh_1_C"/>
    <property type="match status" value="1"/>
</dbReference>
<dbReference type="Pfam" id="PF00056">
    <property type="entry name" value="Ldh_1_N"/>
    <property type="match status" value="1"/>
</dbReference>
<dbReference type="PIRSF" id="PIRSF000102">
    <property type="entry name" value="Lac_mal_DH"/>
    <property type="match status" value="1"/>
</dbReference>
<dbReference type="SUPFAM" id="SSF56327">
    <property type="entry name" value="LDH C-terminal domain-like"/>
    <property type="match status" value="1"/>
</dbReference>
<dbReference type="SUPFAM" id="SSF51735">
    <property type="entry name" value="NAD(P)-binding Rossmann-fold domains"/>
    <property type="match status" value="1"/>
</dbReference>
<dbReference type="PROSITE" id="PS00068">
    <property type="entry name" value="MDH"/>
    <property type="match status" value="1"/>
</dbReference>
<comment type="function">
    <text evidence="1">Catalyzes the reversible oxidation of malate to oxaloacetate.</text>
</comment>
<comment type="catalytic activity">
    <reaction evidence="1">
        <text>(S)-malate + NAD(+) = oxaloacetate + NADH + H(+)</text>
        <dbReference type="Rhea" id="RHEA:21432"/>
        <dbReference type="ChEBI" id="CHEBI:15378"/>
        <dbReference type="ChEBI" id="CHEBI:15589"/>
        <dbReference type="ChEBI" id="CHEBI:16452"/>
        <dbReference type="ChEBI" id="CHEBI:57540"/>
        <dbReference type="ChEBI" id="CHEBI:57945"/>
        <dbReference type="EC" id="1.1.1.37"/>
    </reaction>
</comment>
<comment type="subunit">
    <text evidence="1">Homodimer.</text>
</comment>
<comment type="similarity">
    <text evidence="1">Belongs to the LDH/MDH superfamily. MDH type 1 family.</text>
</comment>
<feature type="chain" id="PRO_1000146176" description="Malate dehydrogenase">
    <location>
        <begin position="1"/>
        <end position="312"/>
    </location>
</feature>
<feature type="active site" description="Proton acceptor" evidence="1">
    <location>
        <position position="177"/>
    </location>
</feature>
<feature type="binding site" evidence="1">
    <location>
        <begin position="7"/>
        <end position="13"/>
    </location>
    <ligand>
        <name>NAD(+)</name>
        <dbReference type="ChEBI" id="CHEBI:57540"/>
    </ligand>
</feature>
<feature type="binding site" evidence="1">
    <location>
        <position position="34"/>
    </location>
    <ligand>
        <name>NAD(+)</name>
        <dbReference type="ChEBI" id="CHEBI:57540"/>
    </ligand>
</feature>
<feature type="binding site" evidence="1">
    <location>
        <position position="81"/>
    </location>
    <ligand>
        <name>substrate</name>
    </ligand>
</feature>
<feature type="binding site" evidence="1">
    <location>
        <position position="87"/>
    </location>
    <ligand>
        <name>substrate</name>
    </ligand>
</feature>
<feature type="binding site" evidence="1">
    <location>
        <position position="94"/>
    </location>
    <ligand>
        <name>NAD(+)</name>
        <dbReference type="ChEBI" id="CHEBI:57540"/>
    </ligand>
</feature>
<feature type="binding site" evidence="1">
    <location>
        <begin position="117"/>
        <end position="119"/>
    </location>
    <ligand>
        <name>NAD(+)</name>
        <dbReference type="ChEBI" id="CHEBI:57540"/>
    </ligand>
</feature>
<feature type="binding site" evidence="1">
    <location>
        <position position="119"/>
    </location>
    <ligand>
        <name>substrate</name>
    </ligand>
</feature>
<feature type="binding site" evidence="1">
    <location>
        <position position="153"/>
    </location>
    <ligand>
        <name>substrate</name>
    </ligand>
</feature>
<feature type="binding site" evidence="1">
    <location>
        <position position="227"/>
    </location>
    <ligand>
        <name>NAD(+)</name>
        <dbReference type="ChEBI" id="CHEBI:57540"/>
    </ligand>
</feature>
<name>MDH_ECOSM</name>